<comment type="function">
    <text evidence="1">Could be a nuclease involved in processing of the 5'-end of pre-16S rRNA.</text>
</comment>
<comment type="subcellular location">
    <subcellularLocation>
        <location evidence="1">Cytoplasm</location>
    </subcellularLocation>
</comment>
<comment type="similarity">
    <text evidence="1">Belongs to the YqgF nuclease family.</text>
</comment>
<proteinExistence type="inferred from homology"/>
<evidence type="ECO:0000255" key="1">
    <source>
        <dbReference type="HAMAP-Rule" id="MF_00651"/>
    </source>
</evidence>
<sequence>MKRYIALDIGDVRIGVARSDIMGIIASPLETINRKKVKSVKRIAEICKENDTNLVVVGIPKSLDGEEKRQAEKVREYIEKLKKEIENLEIIEVDERFSTVIADNILKELNKNGAIEKRKVVDKVAASIILQTYLDMKK</sequence>
<organism>
    <name type="scientific">Fusobacterium nucleatum subsp. nucleatum (strain ATCC 25586 / DSM 15643 / BCRC 10681 / CIP 101130 / JCM 8532 / KCTC 2640 / LMG 13131 / VPI 4355)</name>
    <dbReference type="NCBI Taxonomy" id="190304"/>
    <lineage>
        <taxon>Bacteria</taxon>
        <taxon>Fusobacteriati</taxon>
        <taxon>Fusobacteriota</taxon>
        <taxon>Fusobacteriia</taxon>
        <taxon>Fusobacteriales</taxon>
        <taxon>Fusobacteriaceae</taxon>
        <taxon>Fusobacterium</taxon>
    </lineage>
</organism>
<dbReference type="EC" id="3.1.-.-" evidence="1"/>
<dbReference type="EMBL" id="AE009951">
    <property type="protein sequence ID" value="AAL94894.1"/>
    <property type="molecule type" value="Genomic_DNA"/>
</dbReference>
<dbReference type="RefSeq" id="NP_603595.1">
    <property type="nucleotide sequence ID" value="NC_003454.1"/>
</dbReference>
<dbReference type="SMR" id="Q8RFJ7"/>
<dbReference type="FunCoup" id="Q8RFJ7">
    <property type="interactions" value="239"/>
</dbReference>
<dbReference type="STRING" id="190304.FN0698"/>
<dbReference type="PaxDb" id="190304-FN0698"/>
<dbReference type="EnsemblBacteria" id="AAL94894">
    <property type="protein sequence ID" value="AAL94894"/>
    <property type="gene ID" value="FN0698"/>
</dbReference>
<dbReference type="KEGG" id="fnu:FN0698"/>
<dbReference type="PATRIC" id="fig|190304.8.peg.1263"/>
<dbReference type="eggNOG" id="COG0816">
    <property type="taxonomic scope" value="Bacteria"/>
</dbReference>
<dbReference type="HOGENOM" id="CLU_098240_0_0_0"/>
<dbReference type="InParanoid" id="Q8RFJ7"/>
<dbReference type="BioCyc" id="FNUC190304:G1FZS-1284-MONOMER"/>
<dbReference type="Proteomes" id="UP000002521">
    <property type="component" value="Chromosome"/>
</dbReference>
<dbReference type="GO" id="GO:0005737">
    <property type="term" value="C:cytoplasm"/>
    <property type="evidence" value="ECO:0007669"/>
    <property type="project" value="UniProtKB-SubCell"/>
</dbReference>
<dbReference type="GO" id="GO:0004518">
    <property type="term" value="F:nuclease activity"/>
    <property type="evidence" value="ECO:0007669"/>
    <property type="project" value="UniProtKB-KW"/>
</dbReference>
<dbReference type="GO" id="GO:0000967">
    <property type="term" value="P:rRNA 5'-end processing"/>
    <property type="evidence" value="ECO:0000318"/>
    <property type="project" value="GO_Central"/>
</dbReference>
<dbReference type="CDD" id="cd16964">
    <property type="entry name" value="YqgF"/>
    <property type="match status" value="1"/>
</dbReference>
<dbReference type="FunFam" id="3.30.420.140:FF:000015">
    <property type="entry name" value="Putative pre-16S rRNA nuclease"/>
    <property type="match status" value="1"/>
</dbReference>
<dbReference type="Gene3D" id="3.30.420.140">
    <property type="entry name" value="YqgF/RNase H-like domain"/>
    <property type="match status" value="1"/>
</dbReference>
<dbReference type="HAMAP" id="MF_00651">
    <property type="entry name" value="Nuclease_YqgF"/>
    <property type="match status" value="1"/>
</dbReference>
<dbReference type="InterPro" id="IPR012337">
    <property type="entry name" value="RNaseH-like_sf"/>
</dbReference>
<dbReference type="InterPro" id="IPR005227">
    <property type="entry name" value="YqgF"/>
</dbReference>
<dbReference type="InterPro" id="IPR006641">
    <property type="entry name" value="YqgF/RNaseH-like_dom"/>
</dbReference>
<dbReference type="InterPro" id="IPR037027">
    <property type="entry name" value="YqgF/RNaseH-like_dom_sf"/>
</dbReference>
<dbReference type="NCBIfam" id="TIGR00250">
    <property type="entry name" value="RNAse_H_YqgF"/>
    <property type="match status" value="1"/>
</dbReference>
<dbReference type="PANTHER" id="PTHR33317">
    <property type="entry name" value="POLYNUCLEOTIDYL TRANSFERASE, RIBONUCLEASE H-LIKE SUPERFAMILY PROTEIN"/>
    <property type="match status" value="1"/>
</dbReference>
<dbReference type="PANTHER" id="PTHR33317:SF4">
    <property type="entry name" value="POLYNUCLEOTIDYL TRANSFERASE, RIBONUCLEASE H-LIKE SUPERFAMILY PROTEIN"/>
    <property type="match status" value="1"/>
</dbReference>
<dbReference type="Pfam" id="PF03652">
    <property type="entry name" value="RuvX"/>
    <property type="match status" value="1"/>
</dbReference>
<dbReference type="SMART" id="SM00732">
    <property type="entry name" value="YqgFc"/>
    <property type="match status" value="1"/>
</dbReference>
<dbReference type="SUPFAM" id="SSF53098">
    <property type="entry name" value="Ribonuclease H-like"/>
    <property type="match status" value="1"/>
</dbReference>
<feature type="chain" id="PRO_0000172066" description="Putative pre-16S rRNA nuclease">
    <location>
        <begin position="1"/>
        <end position="138"/>
    </location>
</feature>
<name>YQGF_FUSNN</name>
<reference key="1">
    <citation type="journal article" date="2002" name="J. Bacteriol.">
        <title>Genome sequence and analysis of the oral bacterium Fusobacterium nucleatum strain ATCC 25586.</title>
        <authorList>
            <person name="Kapatral V."/>
            <person name="Anderson I."/>
            <person name="Ivanova N."/>
            <person name="Reznik G."/>
            <person name="Los T."/>
            <person name="Lykidis A."/>
            <person name="Bhattacharyya A."/>
            <person name="Bartman A."/>
            <person name="Gardner W."/>
            <person name="Grechkin G."/>
            <person name="Zhu L."/>
            <person name="Vasieva O."/>
            <person name="Chu L."/>
            <person name="Kogan Y."/>
            <person name="Chaga O."/>
            <person name="Goltsman E."/>
            <person name="Bernal A."/>
            <person name="Larsen N."/>
            <person name="D'Souza M."/>
            <person name="Walunas T."/>
            <person name="Pusch G."/>
            <person name="Haselkorn R."/>
            <person name="Fonstein M."/>
            <person name="Kyrpides N.C."/>
            <person name="Overbeek R."/>
        </authorList>
    </citation>
    <scope>NUCLEOTIDE SEQUENCE [LARGE SCALE GENOMIC DNA]</scope>
    <source>
        <strain>ATCC 25586 / DSM 15643 / BCRC 10681 / CIP 101130 / JCM 8532 / KCTC 2640 / LMG 13131 / VPI 4355</strain>
    </source>
</reference>
<keyword id="KW-0963">Cytoplasm</keyword>
<keyword id="KW-0378">Hydrolase</keyword>
<keyword id="KW-0540">Nuclease</keyword>
<keyword id="KW-1185">Reference proteome</keyword>
<keyword id="KW-0690">Ribosome biogenesis</keyword>
<protein>
    <recommendedName>
        <fullName evidence="1">Putative pre-16S rRNA nuclease</fullName>
        <ecNumber evidence="1">3.1.-.-</ecNumber>
    </recommendedName>
</protein>
<gene>
    <name type="ordered locus">FN0698</name>
</gene>
<accession>Q8RFJ7</accession>